<feature type="chain" id="PRO_0000056887" description="Anthranilate synthase component 2">
    <location>
        <begin position="1"/>
        <end position="201"/>
    </location>
</feature>
<feature type="domain" description="Glutamine amidotransferase type-1" evidence="3">
    <location>
        <begin position="2"/>
        <end position="201"/>
    </location>
</feature>
<feature type="active site" description="Nucleophile; for GATase activity" evidence="3">
    <location>
        <position position="89"/>
    </location>
</feature>
<feature type="active site" description="For GATase activity" evidence="3">
    <location>
        <position position="182"/>
    </location>
</feature>
<feature type="active site" description="For GATase activity" evidence="3">
    <location>
        <position position="184"/>
    </location>
</feature>
<feature type="binding site" evidence="2">
    <location>
        <begin position="59"/>
        <end position="61"/>
    </location>
    <ligand>
        <name>L-glutamine</name>
        <dbReference type="ChEBI" id="CHEBI:58359"/>
    </ligand>
</feature>
<feature type="binding site" evidence="2">
    <location>
        <position position="93"/>
    </location>
    <ligand>
        <name>L-glutamine</name>
        <dbReference type="ChEBI" id="CHEBI:58359"/>
    </ligand>
</feature>
<feature type="binding site" evidence="2">
    <location>
        <begin position="139"/>
        <end position="140"/>
    </location>
    <ligand>
        <name>L-glutamine</name>
        <dbReference type="ChEBI" id="CHEBI:58359"/>
    </ligand>
</feature>
<accession>P20441</accession>
<keyword id="KW-0028">Amino-acid biosynthesis</keyword>
<keyword id="KW-0057">Aromatic amino acid biosynthesis</keyword>
<keyword id="KW-0315">Glutamine amidotransferase</keyword>
<keyword id="KW-0456">Lyase</keyword>
<keyword id="KW-0822">Tryptophan biosynthesis</keyword>
<dbReference type="EC" id="4.1.3.27"/>
<dbReference type="EMBL" id="M22468">
    <property type="protein sequence ID" value="AAA88217.1"/>
    <property type="molecule type" value="Genomic_DNA"/>
</dbReference>
<dbReference type="PIR" id="C32840">
    <property type="entry name" value="C32840"/>
</dbReference>
<dbReference type="SMR" id="P20441"/>
<dbReference type="MEROPS" id="C26.959"/>
<dbReference type="UniPathway" id="UPA00035">
    <property type="reaction ID" value="UER00040"/>
</dbReference>
<dbReference type="GO" id="GO:0005829">
    <property type="term" value="C:cytosol"/>
    <property type="evidence" value="ECO:0007669"/>
    <property type="project" value="TreeGrafter"/>
</dbReference>
<dbReference type="GO" id="GO:0004049">
    <property type="term" value="F:anthranilate synthase activity"/>
    <property type="evidence" value="ECO:0007669"/>
    <property type="project" value="UniProtKB-EC"/>
</dbReference>
<dbReference type="GO" id="GO:0000162">
    <property type="term" value="P:L-tryptophan biosynthetic process"/>
    <property type="evidence" value="ECO:0007669"/>
    <property type="project" value="UniProtKB-UniPathway"/>
</dbReference>
<dbReference type="CDD" id="cd01743">
    <property type="entry name" value="GATase1_Anthranilate_Synthase"/>
    <property type="match status" value="1"/>
</dbReference>
<dbReference type="FunFam" id="3.40.50.880:FF:000003">
    <property type="entry name" value="Anthranilate synthase component II"/>
    <property type="match status" value="1"/>
</dbReference>
<dbReference type="Gene3D" id="3.40.50.880">
    <property type="match status" value="1"/>
</dbReference>
<dbReference type="InterPro" id="IPR050472">
    <property type="entry name" value="Anth_synth/Amidotransfase"/>
</dbReference>
<dbReference type="InterPro" id="IPR029062">
    <property type="entry name" value="Class_I_gatase-like"/>
</dbReference>
<dbReference type="InterPro" id="IPR017926">
    <property type="entry name" value="GATASE"/>
</dbReference>
<dbReference type="InterPro" id="IPR006221">
    <property type="entry name" value="TrpG/PapA_dom"/>
</dbReference>
<dbReference type="NCBIfam" id="TIGR00566">
    <property type="entry name" value="trpG_papA"/>
    <property type="match status" value="1"/>
</dbReference>
<dbReference type="PANTHER" id="PTHR43418:SF4">
    <property type="entry name" value="MULTIFUNCTIONAL TRYPTOPHAN BIOSYNTHESIS PROTEIN"/>
    <property type="match status" value="1"/>
</dbReference>
<dbReference type="PANTHER" id="PTHR43418">
    <property type="entry name" value="MULTIFUNCTIONAL TRYPTOPHAN BIOSYNTHESIS PROTEIN-RELATED"/>
    <property type="match status" value="1"/>
</dbReference>
<dbReference type="Pfam" id="PF00117">
    <property type="entry name" value="GATase"/>
    <property type="match status" value="1"/>
</dbReference>
<dbReference type="PRINTS" id="PR00097">
    <property type="entry name" value="ANTSNTHASEII"/>
</dbReference>
<dbReference type="PRINTS" id="PR00099">
    <property type="entry name" value="CPSGATASE"/>
</dbReference>
<dbReference type="PRINTS" id="PR00096">
    <property type="entry name" value="GATASE"/>
</dbReference>
<dbReference type="SUPFAM" id="SSF52317">
    <property type="entry name" value="Class I glutamine amidotransferase-like"/>
    <property type="match status" value="1"/>
</dbReference>
<dbReference type="PROSITE" id="PS51273">
    <property type="entry name" value="GATASE_TYPE_1"/>
    <property type="match status" value="1"/>
</dbReference>
<name>TRPG_LEPBI</name>
<evidence type="ECO:0000250" key="1"/>
<evidence type="ECO:0000250" key="2">
    <source>
        <dbReference type="UniProtKB" id="P00900"/>
    </source>
</evidence>
<evidence type="ECO:0000255" key="3">
    <source>
        <dbReference type="PROSITE-ProRule" id="PRU00605"/>
    </source>
</evidence>
<reference key="1">
    <citation type="journal article" date="1989" name="J. Bacteriol.">
        <title>Identification and nucleotide sequence of the Leptospira biflexa serovar patoc trpE and trpG genes.</title>
        <authorList>
            <person name="Yelton D.B."/>
            <person name="Peng S.L."/>
        </authorList>
    </citation>
    <scope>NUCLEOTIDE SEQUENCE [GENOMIC DNA]</scope>
    <source>
        <strain>Serovar Patoc</strain>
    </source>
</reference>
<proteinExistence type="inferred from homology"/>
<organism>
    <name type="scientific">Leptospira biflexa</name>
    <dbReference type="NCBI Taxonomy" id="172"/>
    <lineage>
        <taxon>Bacteria</taxon>
        <taxon>Pseudomonadati</taxon>
        <taxon>Spirochaetota</taxon>
        <taxon>Spirochaetia</taxon>
        <taxon>Leptospirales</taxon>
        <taxon>Leptospiraceae</taxon>
        <taxon>Leptospira</taxon>
    </lineage>
</organism>
<gene>
    <name type="primary">trpG</name>
</gene>
<protein>
    <recommendedName>
        <fullName>Anthranilate synthase component 2</fullName>
        <shortName>AS</shortName>
        <shortName>ASII</shortName>
        <ecNumber>4.1.3.27</ecNumber>
    </recommendedName>
    <alternativeName>
        <fullName>Anthranilate synthase, GATase component</fullName>
    </alternativeName>
    <alternativeName>
        <fullName>Anthranilate synthase, glutamine amidotransferase component</fullName>
    </alternativeName>
</protein>
<comment type="function">
    <text evidence="1">Part of a heterotetrameric complex that catalyzes the two-step biosynthesis of anthranilate, an intermediate in the biosynthesis of L-tryptophan. In the first step, the glutamine-binding beta subunit (TrpG) of anthranilate synthase (AS) provides the glutamine amidotransferase activity which generates ammonia as a substrate that, along with chorismate, is used in the second step, catalyzed by the large alpha subunit of AS (TrpE) to produce anthranilate. In the absence of TrpG, TrpE can synthesize anthranilate directly from chorismate and high concentrations of ammonia (By similarity).</text>
</comment>
<comment type="catalytic activity">
    <reaction>
        <text>chorismate + L-glutamine = anthranilate + pyruvate + L-glutamate + H(+)</text>
        <dbReference type="Rhea" id="RHEA:21732"/>
        <dbReference type="ChEBI" id="CHEBI:15361"/>
        <dbReference type="ChEBI" id="CHEBI:15378"/>
        <dbReference type="ChEBI" id="CHEBI:16567"/>
        <dbReference type="ChEBI" id="CHEBI:29748"/>
        <dbReference type="ChEBI" id="CHEBI:29985"/>
        <dbReference type="ChEBI" id="CHEBI:58359"/>
        <dbReference type="EC" id="4.1.3.27"/>
    </reaction>
</comment>
<comment type="pathway">
    <text>Amino-acid biosynthesis; L-tryptophan biosynthesis; L-tryptophan from chorismate: step 1/5.</text>
</comment>
<comment type="subunit">
    <text evidence="1">Heterotetramer consisting of two non-identical subunits: a beta subunit (TrpG) and a large alpha subunit (TrpE).</text>
</comment>
<sequence length="201" mass="22158">MKVLILDNYDSFTFNLYQIVGEILEEREKPFQLDVIRNDEKPFEWIKSANYDKIIISPGPGHPADPAYFGVSADILKELGKTPPVLGICLGMQGMATVFGGEVVRANIAMHGKLSPIEHDGKGVFSGLTQGIEIMRYHSLVAKEISLPNDLEITARVSAGEGKGEIMGLRHKSLKIEGVQFHPESFGSEEGKCLLRNFINS</sequence>